<comment type="function">
    <text evidence="2 7 8 9 10 11">ATP-gated nonselective transmembrane cation channel. Requires high millimolar-range concentrations of ATP to become activated (PubMed:9849870). ATP binding trigers the rapid opening of the channel and allows Na(+) and Ca(2+) influx and K(+) efflux (By similarity). Has also the ability to form a large pore in the cell membrane, allowing the passage of large cationic molecules (PubMed:25281740). In microglia, may mediate NADPH transport across the plasma membrane (By similarity). In immune cells, P2RX7 acts as a molecular sensor in pathological inflammatory states by detecting and responding to high local concentrations of extracellar ATP. In microglial cells, P2RX7 activation leads to the release of pro-inflammatory cytokines, such as IL-1beta and IL-18, through the activation of the NLRP3 inflammasome and caspase-1 (PubMed:26877061). Cooperates with KCNK6 to activate NLRP3 inflammasome (PubMed:29958799). Activates death pathways leading to apoptosis and autophagy (By similarity). Activates death pathways leading to pyroptosis (PubMed:26572062).</text>
</comment>
<comment type="catalytic activity">
    <reaction evidence="2">
        <text>Ca(2+)(in) = Ca(2+)(out)</text>
        <dbReference type="Rhea" id="RHEA:29671"/>
        <dbReference type="ChEBI" id="CHEBI:29108"/>
    </reaction>
</comment>
<comment type="catalytic activity">
    <reaction evidence="2">
        <text>K(+)(in) = K(+)(out)</text>
        <dbReference type="Rhea" id="RHEA:29463"/>
        <dbReference type="ChEBI" id="CHEBI:29103"/>
    </reaction>
</comment>
<comment type="catalytic activity">
    <reaction evidence="2">
        <text>Na(+)(in) = Na(+)(out)</text>
        <dbReference type="Rhea" id="RHEA:34963"/>
        <dbReference type="ChEBI" id="CHEBI:29101"/>
    </reaction>
</comment>
<comment type="activity regulation">
    <text evidence="1 2 7">Activated by high extracellular ATP levels (0.1-2.5 mM). The synthetic analog 2'(3')-O-(4-benzoylbenzoyl)ATP (BzATP) acts as a potent agonist (PubMed:25281740). Does not undergo desensitization, instead, undergoes a facilitation process where currents progressively increase with repetitive or prolonged agonist application (By similarity). Palmitoylation prevents channel desensitization (By similarity). The permeability of the P2RX7 channel is modulated by the amount of cholesterol in the plasma membrane (PubMed:25281740).</text>
</comment>
<comment type="subunit">
    <text evidence="1 2">Homotrimers (By similarity). Interacts with LAMA3, ITGB2, ACTB, ACTN4, SVIL, MPP3, HSPA1, HSPCB, HSPA8, PIK230 and PTPRB (By similarity). Interacts (via C-terminus) with EMP2 (By similarity).</text>
</comment>
<comment type="subcellular location">
    <subcellularLocation>
        <location evidence="2">Cell membrane</location>
        <topology evidence="1">Multi-pass membrane protein</topology>
    </subcellularLocation>
</comment>
<comment type="domain">
    <text evidence="1">Contains two P2RX7-specific cytoplasmic domains, the C-cysteines (C-cys) anchor and the cytoplasmic ballast. Palmitoylation of the cytoplasmic C-cys anchor prevents receptor desensitization. The cytoplasmic ballast contains a zinc ion complex and a guanosine nucleotide binding site.</text>
</comment>
<comment type="PTM">
    <text evidence="2">Phosphorylation results in its inactivation.</text>
</comment>
<comment type="PTM">
    <text evidence="5">ADP-ribosylation at Arg-125 is necessary and sufficient to activate P2RX7 and gate the channel.</text>
</comment>
<comment type="PTM">
    <text evidence="1 2">Palmitoylation of several cysteines in the C-terminal cytoplasmic tail is required for efficient localization to cell surface (By similarity). Palmitoylation prevents channel desensitization by physically anchoring the palmitoylated groups to the membrane (By similarity).</text>
</comment>
<comment type="disruption phenotype">
    <text evidence="4">P2RX7-deficient mice are less prone to initiate inflammation in response to a variety of stimuli. Secretion of mature IL-1beta is severely reduced and initiation of the cascade of inflammatory cytokines is also impaired.</text>
</comment>
<comment type="similarity">
    <text evidence="12">Belongs to the P2X receptor family.</text>
</comment>
<comment type="caution">
    <text evidence="1">It has been proposed that P2RX7 forms a dilated pore after prolonged exposure to ATP, permitting passage of large organic cations such as NMDG(+) (By similarity). Two mechanisms have been proposed to explain this macropore formation: progressive dilatation and/or the recruitment of an accessory pore-forming molecule (By similarity). However, strong evidences now indicates that P2RX7 channel itself has the ability to form a large-conductance pore in the absence of any significant dilatation (By similarity). From its initial activation, the P2RX7 channel allows large cationic molecules to pass through, although at a much slower rate than smaller cations such as Na(+), K(+), and Ca(2+) (By similarity).</text>
</comment>
<proteinExistence type="evidence at protein level"/>
<feature type="chain" id="PRO_0000161561" description="P2X purinoceptor 7">
    <location>
        <begin position="1"/>
        <end position="595"/>
    </location>
</feature>
<feature type="topological domain" description="Cytoplasmic" evidence="12">
    <location>
        <begin position="1"/>
        <end position="22"/>
    </location>
</feature>
<feature type="transmembrane region" description="Helical; Name=1" evidence="1">
    <location>
        <begin position="23"/>
        <end position="46"/>
    </location>
</feature>
<feature type="topological domain" description="Extracellular" evidence="12">
    <location>
        <begin position="47"/>
        <end position="328"/>
    </location>
</feature>
<feature type="transmembrane region" description="Helical; Name=2" evidence="1">
    <location>
        <begin position="329"/>
        <end position="353"/>
    </location>
</feature>
<feature type="topological domain" description="Cytoplasmic" evidence="12">
    <location>
        <begin position="354"/>
        <end position="595"/>
    </location>
</feature>
<feature type="region of interest" description="C-cys anchor" evidence="1">
    <location>
        <begin position="360"/>
        <end position="377"/>
    </location>
</feature>
<feature type="region of interest" description="Cytoplasmic ballast" evidence="1">
    <location>
        <begin position="395"/>
        <end position="595"/>
    </location>
</feature>
<feature type="binding site" evidence="1">
    <location>
        <position position="189"/>
    </location>
    <ligand>
        <name>ATP</name>
        <dbReference type="ChEBI" id="CHEBI:30616"/>
    </ligand>
</feature>
<feature type="binding site" evidence="1">
    <location>
        <position position="294"/>
    </location>
    <ligand>
        <name>ATP</name>
        <dbReference type="ChEBI" id="CHEBI:30616"/>
    </ligand>
</feature>
<feature type="binding site" evidence="1">
    <location>
        <position position="311"/>
    </location>
    <ligand>
        <name>ATP</name>
        <dbReference type="ChEBI" id="CHEBI:30616"/>
    </ligand>
</feature>
<feature type="binding site" evidence="1">
    <location>
        <position position="342"/>
    </location>
    <ligand>
        <name>Na(+)</name>
        <dbReference type="ChEBI" id="CHEBI:29101"/>
        <note>ligand shared between homotrimeric partners</note>
    </ligand>
</feature>
<feature type="binding site" evidence="1">
    <location>
        <position position="479"/>
    </location>
    <ligand>
        <name>Zn(2+)</name>
        <dbReference type="ChEBI" id="CHEBI:29105"/>
    </ligand>
</feature>
<feature type="binding site" evidence="1">
    <location>
        <position position="499"/>
    </location>
    <ligand>
        <name>Zn(2+)</name>
        <dbReference type="ChEBI" id="CHEBI:29105"/>
    </ligand>
</feature>
<feature type="binding site" evidence="1">
    <location>
        <position position="506"/>
    </location>
    <ligand>
        <name>Zn(2+)</name>
        <dbReference type="ChEBI" id="CHEBI:29105"/>
    </ligand>
</feature>
<feature type="binding site" evidence="1">
    <location>
        <position position="546"/>
    </location>
    <ligand>
        <name>GTP</name>
        <dbReference type="ChEBI" id="CHEBI:37565"/>
    </ligand>
</feature>
<feature type="binding site" evidence="1">
    <location>
        <position position="547"/>
    </location>
    <ligand>
        <name>GTP</name>
        <dbReference type="ChEBI" id="CHEBI:37565"/>
    </ligand>
</feature>
<feature type="binding site" evidence="1">
    <location>
        <position position="550"/>
    </location>
    <ligand>
        <name>GTP</name>
        <dbReference type="ChEBI" id="CHEBI:37565"/>
    </ligand>
</feature>
<feature type="binding site" evidence="1">
    <location>
        <position position="567"/>
    </location>
    <ligand>
        <name>GTP</name>
        <dbReference type="ChEBI" id="CHEBI:37565"/>
    </ligand>
</feature>
<feature type="binding site" evidence="1">
    <location>
        <position position="572"/>
    </location>
    <ligand>
        <name>Zn(2+)</name>
        <dbReference type="ChEBI" id="CHEBI:29105"/>
    </ligand>
</feature>
<feature type="binding site" evidence="1">
    <location>
        <position position="583"/>
    </location>
    <ligand>
        <name>GTP</name>
        <dbReference type="ChEBI" id="CHEBI:37565"/>
    </ligand>
</feature>
<feature type="binding site" evidence="1">
    <location>
        <position position="589"/>
    </location>
    <ligand>
        <name>GTP</name>
        <dbReference type="ChEBI" id="CHEBI:37565"/>
    </ligand>
</feature>
<feature type="binding site" evidence="1">
    <location>
        <position position="590"/>
    </location>
    <ligand>
        <name>GTP</name>
        <dbReference type="ChEBI" id="CHEBI:37565"/>
    </ligand>
</feature>
<feature type="site" description="Selectivity filter 1" evidence="2">
    <location>
        <position position="342"/>
    </location>
</feature>
<feature type="modified residue" description="ADP-ribosylarginine; by ART2B" evidence="5">
    <location>
        <position position="125"/>
    </location>
</feature>
<feature type="modified residue" description="ADP-ribosylarginine; by ART2B" evidence="5">
    <location>
        <position position="133"/>
    </location>
</feature>
<feature type="modified residue" description="Phosphoserine" evidence="2">
    <location>
        <position position="390"/>
    </location>
</feature>
<feature type="lipid moiety-binding region" description="S-palmitoyl cysteine" evidence="1">
    <location>
        <position position="4"/>
    </location>
</feature>
<feature type="lipid moiety-binding region" description="S-palmitoyl cysteine" evidence="1">
    <location>
        <position position="363"/>
    </location>
</feature>
<feature type="lipid moiety-binding region" description="S-palmitoyl cysteine" evidence="1">
    <location>
        <position position="374"/>
    </location>
</feature>
<feature type="lipid moiety-binding region" description="S-palmitoyl cysteine" evidence="1">
    <location>
        <position position="377"/>
    </location>
</feature>
<feature type="glycosylation site" description="N-linked (GlcNAc...) asparagine" evidence="6">
    <location>
        <position position="74"/>
    </location>
</feature>
<feature type="glycosylation site" description="N-linked (GlcNAc...) asparagine" evidence="3">
    <location>
        <position position="187"/>
    </location>
</feature>
<feature type="glycosylation site" description="N-linked (GlcNAc...) asparagine" evidence="3">
    <location>
        <position position="202"/>
    </location>
</feature>
<feature type="glycosylation site" description="N-linked (GlcNAc...) asparagine" evidence="3">
    <location>
        <position position="213"/>
    </location>
</feature>
<feature type="glycosylation site" description="N-linked (GlcNAc...) asparagine" evidence="3">
    <location>
        <position position="241"/>
    </location>
</feature>
<feature type="disulfide bond" evidence="1">
    <location>
        <begin position="119"/>
        <end position="168"/>
    </location>
</feature>
<feature type="disulfide bond" evidence="1">
    <location>
        <begin position="129"/>
        <end position="152"/>
    </location>
</feature>
<feature type="disulfide bond" evidence="1">
    <location>
        <begin position="135"/>
        <end position="162"/>
    </location>
</feature>
<feature type="disulfide bond" evidence="1">
    <location>
        <begin position="216"/>
        <end position="226"/>
    </location>
</feature>
<feature type="disulfide bond" evidence="1">
    <location>
        <begin position="260"/>
        <end position="269"/>
    </location>
</feature>
<feature type="mutagenesis site" description="Abolishes calcium responses to NAD." evidence="5">
    <original>R</original>
    <variation>K</variation>
    <location>
        <position position="125"/>
    </location>
</feature>
<feature type="mutagenesis site" description="No effect on calcium responses to NAD." evidence="5">
    <original>R</original>
    <variation>K</variation>
    <location>
        <position position="133"/>
    </location>
</feature>
<feature type="sequence conflict" description="In Ref. 1; CAA08853." evidence="12" ref="1">
    <original>L</original>
    <variation>F</variation>
    <location>
        <position position="11"/>
    </location>
</feature>
<feature type="sequence conflict" description="In Ref. 1; CAA08853." evidence="12" ref="1">
    <original>T</original>
    <variation>A</variation>
    <location>
        <position position="221"/>
    </location>
</feature>
<feature type="sequence conflict" description="In Ref. 1; CAA08853." evidence="12" ref="1">
    <original>T</original>
    <variation>M</variation>
    <location>
        <position position="283"/>
    </location>
</feature>
<feature type="sequence conflict" description="In Ref. 2; BAE26301." evidence="12" ref="2">
    <original>L</original>
    <variation>P</variation>
    <location>
        <position position="451"/>
    </location>
</feature>
<feature type="sequence conflict" description="In Ref. 2; BAE26301." evidence="12" ref="2">
    <original>H</original>
    <variation>R</variation>
    <location>
        <position position="514"/>
    </location>
</feature>
<evidence type="ECO:0000250" key="1">
    <source>
        <dbReference type="UniProtKB" id="Q64663"/>
    </source>
</evidence>
<evidence type="ECO:0000250" key="2">
    <source>
        <dbReference type="UniProtKB" id="Q99572"/>
    </source>
</evidence>
<evidence type="ECO:0000255" key="3"/>
<evidence type="ECO:0000269" key="4">
    <source>
    </source>
</evidence>
<evidence type="ECO:0000269" key="5">
    <source>
    </source>
</evidence>
<evidence type="ECO:0000269" key="6">
    <source>
    </source>
</evidence>
<evidence type="ECO:0000269" key="7">
    <source>
    </source>
</evidence>
<evidence type="ECO:0000269" key="8">
    <source>
    </source>
</evidence>
<evidence type="ECO:0000269" key="9">
    <source>
    </source>
</evidence>
<evidence type="ECO:0000269" key="10">
    <source>
    </source>
</evidence>
<evidence type="ECO:0000269" key="11">
    <source>
    </source>
</evidence>
<evidence type="ECO:0000305" key="12"/>
<protein>
    <recommendedName>
        <fullName>P2X purinoceptor 7</fullName>
        <shortName>P2X7</shortName>
    </recommendedName>
    <alternativeName>
        <fullName>ATP receptor</fullName>
    </alternativeName>
    <alternativeName>
        <fullName>P2Z receptor</fullName>
    </alternativeName>
    <alternativeName>
        <fullName>Purinergic receptor</fullName>
    </alternativeName>
</protein>
<organism>
    <name type="scientific">Mus musculus</name>
    <name type="common">Mouse</name>
    <dbReference type="NCBI Taxonomy" id="10090"/>
    <lineage>
        <taxon>Eukaryota</taxon>
        <taxon>Metazoa</taxon>
        <taxon>Chordata</taxon>
        <taxon>Craniata</taxon>
        <taxon>Vertebrata</taxon>
        <taxon>Euteleostomi</taxon>
        <taxon>Mammalia</taxon>
        <taxon>Eutheria</taxon>
        <taxon>Euarchontoglires</taxon>
        <taxon>Glires</taxon>
        <taxon>Rodentia</taxon>
        <taxon>Myomorpha</taxon>
        <taxon>Muroidea</taxon>
        <taxon>Muridae</taxon>
        <taxon>Murinae</taxon>
        <taxon>Mus</taxon>
        <taxon>Mus</taxon>
    </lineage>
</organism>
<accession>Q9Z1M0</accession>
<accession>Q3ULZ7</accession>
<sequence>MPACCSWNDVLQYETNKVTRIQSTNYGTVKWVLHMIVFSYISFALVSDKLYQRKEPVISSVHTKVKGIAEVTENVTEGGVTKLGHSIFDTADYTFPLQGNSFFVMTNYVKSEGQVQTLCPEYPRRGAQCSSDRRCKKGWMDPQSKGIQTGRCVPYDKTRKTCEVSAWCPTEEEKEAPRPALLRSAENFTVLIKNNIHFPGHNYTTRNILPTMNGSCTFHKTWDPQCSIFRLGDIFQEAGENFTEVAVQGGIMGIEIYWDCNLDSWSHHCRPRYSFRRLDDKNTDESFVPGYNFRYAKYYKENNVEKRTLIKAFGIRFDILVFGTGGKFDIIQLVVYIGSTLSYFGLATVCIDLLINTYSSAFCRSGVYPYCKCCEPCTVNEYYYRKKCESIMEPKPTLKYVSFVDEPHIRMVDQQLLGKSLQVVKGQEVPRPQMDFSDLSRLSLSLHDSPLTPGQSEEIQLLHEEVAPKSGDSPSWCQCGNCLPSRLPEQRRALEELCCRRKPGRCITTSKLFHKLVLSRDTLQLLLLYQDPLLVLGEEATNSRLRHRAYRCYATWRFGSQDMADFAILPSCCRWRIRKEFPKTEGQYSGFKYPY</sequence>
<reference key="1">
    <citation type="journal article" date="1998" name="FEBS Lett.">
        <title>Cloning and functional characterisation of the mouse P2X7 receptor.</title>
        <authorList>
            <person name="Chessell I.P."/>
            <person name="Simon J."/>
            <person name="Hibell A.D."/>
            <person name="Michel A.D."/>
            <person name="Barnard E.A."/>
            <person name="Humphrey P.P."/>
        </authorList>
    </citation>
    <scope>NUCLEOTIDE SEQUENCE [MRNA]</scope>
    <scope>FUNCTION</scope>
</reference>
<reference key="2">
    <citation type="journal article" date="2005" name="Science">
        <title>The transcriptional landscape of the mammalian genome.</title>
        <authorList>
            <person name="Carninci P."/>
            <person name="Kasukawa T."/>
            <person name="Katayama S."/>
            <person name="Gough J."/>
            <person name="Frith M.C."/>
            <person name="Maeda N."/>
            <person name="Oyama R."/>
            <person name="Ravasi T."/>
            <person name="Lenhard B."/>
            <person name="Wells C."/>
            <person name="Kodzius R."/>
            <person name="Shimokawa K."/>
            <person name="Bajic V.B."/>
            <person name="Brenner S.E."/>
            <person name="Batalov S."/>
            <person name="Forrest A.R."/>
            <person name="Zavolan M."/>
            <person name="Davis M.J."/>
            <person name="Wilming L.G."/>
            <person name="Aidinis V."/>
            <person name="Allen J.E."/>
            <person name="Ambesi-Impiombato A."/>
            <person name="Apweiler R."/>
            <person name="Aturaliya R.N."/>
            <person name="Bailey T.L."/>
            <person name="Bansal M."/>
            <person name="Baxter L."/>
            <person name="Beisel K.W."/>
            <person name="Bersano T."/>
            <person name="Bono H."/>
            <person name="Chalk A.M."/>
            <person name="Chiu K.P."/>
            <person name="Choudhary V."/>
            <person name="Christoffels A."/>
            <person name="Clutterbuck D.R."/>
            <person name="Crowe M.L."/>
            <person name="Dalla E."/>
            <person name="Dalrymple B.P."/>
            <person name="de Bono B."/>
            <person name="Della Gatta G."/>
            <person name="di Bernardo D."/>
            <person name="Down T."/>
            <person name="Engstrom P."/>
            <person name="Fagiolini M."/>
            <person name="Faulkner G."/>
            <person name="Fletcher C.F."/>
            <person name="Fukushima T."/>
            <person name="Furuno M."/>
            <person name="Futaki S."/>
            <person name="Gariboldi M."/>
            <person name="Georgii-Hemming P."/>
            <person name="Gingeras T.R."/>
            <person name="Gojobori T."/>
            <person name="Green R.E."/>
            <person name="Gustincich S."/>
            <person name="Harbers M."/>
            <person name="Hayashi Y."/>
            <person name="Hensch T.K."/>
            <person name="Hirokawa N."/>
            <person name="Hill D."/>
            <person name="Huminiecki L."/>
            <person name="Iacono M."/>
            <person name="Ikeo K."/>
            <person name="Iwama A."/>
            <person name="Ishikawa T."/>
            <person name="Jakt M."/>
            <person name="Kanapin A."/>
            <person name="Katoh M."/>
            <person name="Kawasawa Y."/>
            <person name="Kelso J."/>
            <person name="Kitamura H."/>
            <person name="Kitano H."/>
            <person name="Kollias G."/>
            <person name="Krishnan S.P."/>
            <person name="Kruger A."/>
            <person name="Kummerfeld S.K."/>
            <person name="Kurochkin I.V."/>
            <person name="Lareau L.F."/>
            <person name="Lazarevic D."/>
            <person name="Lipovich L."/>
            <person name="Liu J."/>
            <person name="Liuni S."/>
            <person name="McWilliam S."/>
            <person name="Madan Babu M."/>
            <person name="Madera M."/>
            <person name="Marchionni L."/>
            <person name="Matsuda H."/>
            <person name="Matsuzawa S."/>
            <person name="Miki H."/>
            <person name="Mignone F."/>
            <person name="Miyake S."/>
            <person name="Morris K."/>
            <person name="Mottagui-Tabar S."/>
            <person name="Mulder N."/>
            <person name="Nakano N."/>
            <person name="Nakauchi H."/>
            <person name="Ng P."/>
            <person name="Nilsson R."/>
            <person name="Nishiguchi S."/>
            <person name="Nishikawa S."/>
            <person name="Nori F."/>
            <person name="Ohara O."/>
            <person name="Okazaki Y."/>
            <person name="Orlando V."/>
            <person name="Pang K.C."/>
            <person name="Pavan W.J."/>
            <person name="Pavesi G."/>
            <person name="Pesole G."/>
            <person name="Petrovsky N."/>
            <person name="Piazza S."/>
            <person name="Reed J."/>
            <person name="Reid J.F."/>
            <person name="Ring B.Z."/>
            <person name="Ringwald M."/>
            <person name="Rost B."/>
            <person name="Ruan Y."/>
            <person name="Salzberg S.L."/>
            <person name="Sandelin A."/>
            <person name="Schneider C."/>
            <person name="Schoenbach C."/>
            <person name="Sekiguchi K."/>
            <person name="Semple C.A."/>
            <person name="Seno S."/>
            <person name="Sessa L."/>
            <person name="Sheng Y."/>
            <person name="Shibata Y."/>
            <person name="Shimada H."/>
            <person name="Shimada K."/>
            <person name="Silva D."/>
            <person name="Sinclair B."/>
            <person name="Sperling S."/>
            <person name="Stupka E."/>
            <person name="Sugiura K."/>
            <person name="Sultana R."/>
            <person name="Takenaka Y."/>
            <person name="Taki K."/>
            <person name="Tammoja K."/>
            <person name="Tan S.L."/>
            <person name="Tang S."/>
            <person name="Taylor M.S."/>
            <person name="Tegner J."/>
            <person name="Teichmann S.A."/>
            <person name="Ueda H.R."/>
            <person name="van Nimwegen E."/>
            <person name="Verardo R."/>
            <person name="Wei C.L."/>
            <person name="Yagi K."/>
            <person name="Yamanishi H."/>
            <person name="Zabarovsky E."/>
            <person name="Zhu S."/>
            <person name="Zimmer A."/>
            <person name="Hide W."/>
            <person name="Bult C."/>
            <person name="Grimmond S.M."/>
            <person name="Teasdale R.D."/>
            <person name="Liu E.T."/>
            <person name="Brusic V."/>
            <person name="Quackenbush J."/>
            <person name="Wahlestedt C."/>
            <person name="Mattick J.S."/>
            <person name="Hume D.A."/>
            <person name="Kai C."/>
            <person name="Sasaki D."/>
            <person name="Tomaru Y."/>
            <person name="Fukuda S."/>
            <person name="Kanamori-Katayama M."/>
            <person name="Suzuki M."/>
            <person name="Aoki J."/>
            <person name="Arakawa T."/>
            <person name="Iida J."/>
            <person name="Imamura K."/>
            <person name="Itoh M."/>
            <person name="Kato T."/>
            <person name="Kawaji H."/>
            <person name="Kawagashira N."/>
            <person name="Kawashima T."/>
            <person name="Kojima M."/>
            <person name="Kondo S."/>
            <person name="Konno H."/>
            <person name="Nakano K."/>
            <person name="Ninomiya N."/>
            <person name="Nishio T."/>
            <person name="Okada M."/>
            <person name="Plessy C."/>
            <person name="Shibata K."/>
            <person name="Shiraki T."/>
            <person name="Suzuki S."/>
            <person name="Tagami M."/>
            <person name="Waki K."/>
            <person name="Watahiki A."/>
            <person name="Okamura-Oho Y."/>
            <person name="Suzuki H."/>
            <person name="Kawai J."/>
            <person name="Hayashizaki Y."/>
        </authorList>
    </citation>
    <scope>NUCLEOTIDE SEQUENCE [LARGE SCALE MRNA]</scope>
    <source>
        <tissue>Mammary gland</tissue>
    </source>
</reference>
<reference key="3">
    <citation type="journal article" date="2001" name="J. Biol. Chem.">
        <title>Altered cytokine production in mice lacking P2X(7) receptors.</title>
        <authorList>
            <person name="Solle M."/>
            <person name="Labasi J."/>
            <person name="Perregaux D.G."/>
            <person name="Stam E."/>
            <person name="Petrushova N."/>
            <person name="Koller B.H."/>
            <person name="Griffiths R.J."/>
            <person name="Gabel C.A."/>
        </authorList>
    </citation>
    <scope>DISRUPTION PHENOTYPE</scope>
    <scope>FUNCTION</scope>
</reference>
<reference key="4">
    <citation type="journal article" date="2009" name="PLoS Biol.">
        <title>Lineage-specific biology revealed by a finished genome assembly of the mouse.</title>
        <authorList>
            <person name="Church D.M."/>
            <person name="Goodstadt L."/>
            <person name="Hillier L.W."/>
            <person name="Zody M.C."/>
            <person name="Goldstein S."/>
            <person name="She X."/>
            <person name="Bult C.J."/>
            <person name="Agarwala R."/>
            <person name="Cherry J.L."/>
            <person name="DiCuccio M."/>
            <person name="Hlavina W."/>
            <person name="Kapustin Y."/>
            <person name="Meric P."/>
            <person name="Maglott D."/>
            <person name="Birtle Z."/>
            <person name="Marques A.C."/>
            <person name="Graves T."/>
            <person name="Zhou S."/>
            <person name="Teague B."/>
            <person name="Potamousis K."/>
            <person name="Churas C."/>
            <person name="Place M."/>
            <person name="Herschleb J."/>
            <person name="Runnheim R."/>
            <person name="Forrest D."/>
            <person name="Amos-Landgraf J."/>
            <person name="Schwartz D.C."/>
            <person name="Cheng Z."/>
            <person name="Lindblad-Toh K."/>
            <person name="Eichler E.E."/>
            <person name="Ponting C.P."/>
        </authorList>
    </citation>
    <scope>NUCLEOTIDE SEQUENCE [LARGE SCALE GENOMIC DNA]</scope>
    <source>
        <strain>C57BL/6J</strain>
    </source>
</reference>
<reference key="5">
    <citation type="journal article" date="2008" name="FASEB J.">
        <title>ADP-ribosylation at R125 gates the P2X7 ion channel by presenting a covalent ligand to its nucleotide binding site.</title>
        <authorList>
            <person name="Adriouch S."/>
            <person name="Bannas P."/>
            <person name="Schwarz N."/>
            <person name="Fliegert R."/>
            <person name="Guse A.H."/>
            <person name="Seman M."/>
            <person name="Haag F."/>
            <person name="Koch-Nolte F."/>
        </authorList>
    </citation>
    <scope>ADP-RIBOSYLATION AT ARG-125 AND ARG-133 BY ART2B</scope>
    <scope>MUTAGENESIS OF ARG-125 AND ARG-133</scope>
</reference>
<reference key="6">
    <citation type="journal article" date="2009" name="Nat. Biotechnol.">
        <title>Mass-spectrometric identification and relative quantification of N-linked cell surface glycoproteins.</title>
        <authorList>
            <person name="Wollscheid B."/>
            <person name="Bausch-Fluck D."/>
            <person name="Henderson C."/>
            <person name="O'Brien R."/>
            <person name="Bibel M."/>
            <person name="Schiess R."/>
            <person name="Aebersold R."/>
            <person name="Watts J.D."/>
        </authorList>
    </citation>
    <scope>GLYCOSYLATION [LARGE SCALE ANALYSIS] AT ASN-74</scope>
</reference>
<reference key="7">
    <citation type="journal article" date="2010" name="Cell">
        <title>A tissue-specific atlas of mouse protein phosphorylation and expression.</title>
        <authorList>
            <person name="Huttlin E.L."/>
            <person name="Jedrychowski M.P."/>
            <person name="Elias J.E."/>
            <person name="Goswami T."/>
            <person name="Rad R."/>
            <person name="Beausoleil S.A."/>
            <person name="Villen J."/>
            <person name="Haas W."/>
            <person name="Sowa M.E."/>
            <person name="Gygi S.P."/>
        </authorList>
    </citation>
    <scope>IDENTIFICATION BY MASS SPECTROMETRY [LARGE SCALE ANALYSIS]</scope>
    <source>
        <tissue>Lung</tissue>
    </source>
</reference>
<reference key="8">
    <citation type="journal article" date="2014" name="J. Biol. Chem.">
        <title>Plasma membrane cholesterol as a regulator of human and rodent P2X7 receptor activation and sensitization.</title>
        <authorList>
            <person name="Robinson L.E."/>
            <person name="Shridar M."/>
            <person name="Smith P."/>
            <person name="Murrell-Lagnado R.D."/>
        </authorList>
    </citation>
    <scope>FUNCTION</scope>
    <scope>ACTIVITY REGULATION</scope>
</reference>
<reference key="9">
    <citation type="journal article" date="2015" name="Immunity">
        <title>Caspase-11 Requires the Pannexin-1 Channel and the Purinergic P2X7 Pore to Mediate Pyroptosis and Endotoxic Shock.</title>
        <authorList>
            <person name="Yang D."/>
            <person name="He Y."/>
            <person name="Munoz-Planillo R."/>
            <person name="Liu Q."/>
            <person name="Nunez G."/>
        </authorList>
    </citation>
    <scope>FUNCTION</scope>
</reference>
<reference key="10">
    <citation type="journal article" date="2016" name="Nat. Commun.">
        <title>Neutrophil P2X7 receptors mediate NLRP3 inflammasome-dependent IL-1beta secretion in response to ATP.</title>
        <authorList>
            <person name="Karmakar M."/>
            <person name="Katsnelson M.A."/>
            <person name="Dubyak G.R."/>
            <person name="Pearlman E."/>
        </authorList>
    </citation>
    <scope>FUNCTION</scope>
</reference>
<reference key="11">
    <citation type="journal article" date="2018" name="Immunity">
        <title>The TWIK2 Potassium Efflux Channel in Macrophages Mediates NLRP3 Inflammasome-Induced Inflammation.</title>
        <authorList>
            <person name="Di A."/>
            <person name="Xiong S."/>
            <person name="Ye Z."/>
            <person name="Malireddi R.K.S."/>
            <person name="Kometani S."/>
            <person name="Zhong M."/>
            <person name="Mittal M."/>
            <person name="Hong Z."/>
            <person name="Kanneganti T.D."/>
            <person name="Rehman J."/>
            <person name="Malik A.B."/>
        </authorList>
    </citation>
    <scope>FUNCTION</scope>
</reference>
<dbReference type="EMBL" id="AJ009823">
    <property type="protein sequence ID" value="CAA08853.1"/>
    <property type="molecule type" value="mRNA"/>
</dbReference>
<dbReference type="EMBL" id="AK145211">
    <property type="protein sequence ID" value="BAE26301.1"/>
    <property type="molecule type" value="mRNA"/>
</dbReference>
<dbReference type="EMBL" id="AC114632">
    <property type="status" value="NOT_ANNOTATED_CDS"/>
    <property type="molecule type" value="Genomic_DNA"/>
</dbReference>
<dbReference type="CCDS" id="CCDS19652.1"/>
<dbReference type="RefSeq" id="NP_035157.2">
    <property type="nucleotide sequence ID" value="NM_011027.4"/>
</dbReference>
<dbReference type="SMR" id="Q9Z1M0"/>
<dbReference type="BioGRID" id="202002">
    <property type="interactions" value="5"/>
</dbReference>
<dbReference type="FunCoup" id="Q9Z1M0">
    <property type="interactions" value="701"/>
</dbReference>
<dbReference type="IntAct" id="Q9Z1M0">
    <property type="interactions" value="1"/>
</dbReference>
<dbReference type="STRING" id="10090.ENSMUSP00000098303"/>
<dbReference type="BindingDB" id="Q9Z1M0"/>
<dbReference type="ChEMBL" id="CHEMBL5183"/>
<dbReference type="DrugCentral" id="Q9Z1M0"/>
<dbReference type="GuidetoPHARMACOLOGY" id="484"/>
<dbReference type="GlyConnect" id="2573">
    <property type="glycosylation" value="6 N-Linked glycans (3 sites)"/>
</dbReference>
<dbReference type="GlyCosmos" id="Q9Z1M0">
    <property type="glycosylation" value="5 sites, 5 glycans"/>
</dbReference>
<dbReference type="GlyGen" id="Q9Z1M0">
    <property type="glycosylation" value="5 sites, 8 N-linked glycans (4 sites)"/>
</dbReference>
<dbReference type="iPTMnet" id="Q9Z1M0"/>
<dbReference type="PhosphoSitePlus" id="Q9Z1M0"/>
<dbReference type="SwissPalm" id="Q9Z1M0"/>
<dbReference type="PaxDb" id="10090-ENSMUSP00000098303"/>
<dbReference type="ProteomicsDB" id="294303"/>
<dbReference type="ABCD" id="Q9Z1M0">
    <property type="antibodies" value="6 sequenced antibodies"/>
</dbReference>
<dbReference type="Antibodypedia" id="19042">
    <property type="antibodies" value="479 antibodies from 42 providers"/>
</dbReference>
<dbReference type="DNASU" id="18439"/>
<dbReference type="Ensembl" id="ENSMUST00000100737.10">
    <property type="protein sequence ID" value="ENSMUSP00000098303.4"/>
    <property type="gene ID" value="ENSMUSG00000029468.18"/>
</dbReference>
<dbReference type="GeneID" id="18439"/>
<dbReference type="KEGG" id="mmu:18439"/>
<dbReference type="UCSC" id="uc008zlq.2">
    <property type="organism name" value="mouse"/>
</dbReference>
<dbReference type="AGR" id="MGI:1339957"/>
<dbReference type="CTD" id="5027"/>
<dbReference type="MGI" id="MGI:1339957">
    <property type="gene designation" value="P2rx7"/>
</dbReference>
<dbReference type="VEuPathDB" id="HostDB:ENSMUSG00000029468"/>
<dbReference type="eggNOG" id="ENOG502QSBN">
    <property type="taxonomic scope" value="Eukaryota"/>
</dbReference>
<dbReference type="GeneTree" id="ENSGT01020000230351"/>
<dbReference type="InParanoid" id="Q9Z1M0"/>
<dbReference type="OMA" id="CNLDSWF"/>
<dbReference type="OrthoDB" id="494673at2759"/>
<dbReference type="PhylomeDB" id="Q9Z1M0"/>
<dbReference type="TreeFam" id="TF328633"/>
<dbReference type="Reactome" id="R-MMU-139853">
    <property type="pathway name" value="Elevation of cytosolic Ca2+ levels"/>
</dbReference>
<dbReference type="Reactome" id="R-MMU-418346">
    <property type="pathway name" value="Platelet homeostasis"/>
</dbReference>
<dbReference type="Reactome" id="R-MMU-844456">
    <property type="pathway name" value="The NLRP3 inflammasome"/>
</dbReference>
<dbReference type="BioGRID-ORCS" id="18439">
    <property type="hits" value="2 hits in 77 CRISPR screens"/>
</dbReference>
<dbReference type="ChiTaRS" id="P2rx7">
    <property type="organism name" value="mouse"/>
</dbReference>
<dbReference type="PRO" id="PR:Q9Z1M0"/>
<dbReference type="Proteomes" id="UP000000589">
    <property type="component" value="Chromosome 5"/>
</dbReference>
<dbReference type="RNAct" id="Q9Z1M0">
    <property type="molecule type" value="protein"/>
</dbReference>
<dbReference type="Bgee" id="ENSMUSG00000029468">
    <property type="expression patterns" value="Expressed in heart right ventricle and 86 other cell types or tissues"/>
</dbReference>
<dbReference type="ExpressionAtlas" id="Q9Z1M0">
    <property type="expression patterns" value="baseline and differential"/>
</dbReference>
<dbReference type="GO" id="GO:0005911">
    <property type="term" value="C:cell-cell junction"/>
    <property type="evidence" value="ECO:0000314"/>
    <property type="project" value="MGI"/>
</dbReference>
<dbReference type="GO" id="GO:0009897">
    <property type="term" value="C:external side of plasma membrane"/>
    <property type="evidence" value="ECO:0000314"/>
    <property type="project" value="MGI"/>
</dbReference>
<dbReference type="GO" id="GO:0016020">
    <property type="term" value="C:membrane"/>
    <property type="evidence" value="ECO:0000314"/>
    <property type="project" value="MGI"/>
</dbReference>
<dbReference type="GO" id="GO:0005739">
    <property type="term" value="C:mitochondrion"/>
    <property type="evidence" value="ECO:0007669"/>
    <property type="project" value="GOC"/>
</dbReference>
<dbReference type="GO" id="GO:0031594">
    <property type="term" value="C:neuromuscular junction"/>
    <property type="evidence" value="ECO:0000314"/>
    <property type="project" value="MGI"/>
</dbReference>
<dbReference type="GO" id="GO:0043025">
    <property type="term" value="C:neuronal cell body"/>
    <property type="evidence" value="ECO:0000314"/>
    <property type="project" value="MGI"/>
</dbReference>
<dbReference type="GO" id="GO:0005886">
    <property type="term" value="C:plasma membrane"/>
    <property type="evidence" value="ECO:0000314"/>
    <property type="project" value="MGI"/>
</dbReference>
<dbReference type="GO" id="GO:0098794">
    <property type="term" value="C:postsynapse"/>
    <property type="evidence" value="ECO:0007669"/>
    <property type="project" value="GOC"/>
</dbReference>
<dbReference type="GO" id="GO:0098793">
    <property type="term" value="C:presynapse"/>
    <property type="evidence" value="ECO:0007669"/>
    <property type="project" value="GOC"/>
</dbReference>
<dbReference type="GO" id="GO:0045202">
    <property type="term" value="C:synapse"/>
    <property type="evidence" value="ECO:0000314"/>
    <property type="project" value="MGI"/>
</dbReference>
<dbReference type="GO" id="GO:0005524">
    <property type="term" value="F:ATP binding"/>
    <property type="evidence" value="ECO:0000315"/>
    <property type="project" value="MGI"/>
</dbReference>
<dbReference type="GO" id="GO:0015267">
    <property type="term" value="F:channel activity"/>
    <property type="evidence" value="ECO:0000315"/>
    <property type="project" value="MGI"/>
</dbReference>
<dbReference type="GO" id="GO:0004931">
    <property type="term" value="F:extracellularly ATP-gated monoatomic cation channel activity"/>
    <property type="evidence" value="ECO:0000315"/>
    <property type="project" value="MGI"/>
</dbReference>
<dbReference type="GO" id="GO:0042802">
    <property type="term" value="F:identical protein binding"/>
    <property type="evidence" value="ECO:0000353"/>
    <property type="project" value="MGI"/>
</dbReference>
<dbReference type="GO" id="GO:0001530">
    <property type="term" value="F:lipopolysaccharide binding"/>
    <property type="evidence" value="ECO:0000314"/>
    <property type="project" value="MGI"/>
</dbReference>
<dbReference type="GO" id="GO:0005267">
    <property type="term" value="F:potassium channel activity"/>
    <property type="evidence" value="ECO:0007669"/>
    <property type="project" value="Ensembl"/>
</dbReference>
<dbReference type="GO" id="GO:0001614">
    <property type="term" value="F:purinergic nucleotide receptor activity"/>
    <property type="evidence" value="ECO:0007669"/>
    <property type="project" value="Ensembl"/>
</dbReference>
<dbReference type="GO" id="GO:0038023">
    <property type="term" value="F:signaling receptor activity"/>
    <property type="evidence" value="ECO:0000315"/>
    <property type="project" value="MGI"/>
</dbReference>
<dbReference type="GO" id="GO:0005272">
    <property type="term" value="F:sodium channel activity"/>
    <property type="evidence" value="ECO:0007669"/>
    <property type="project" value="Ensembl"/>
</dbReference>
<dbReference type="GO" id="GO:0032060">
    <property type="term" value="P:bleb assembly"/>
    <property type="evidence" value="ECO:0000315"/>
    <property type="project" value="UniProtKB"/>
</dbReference>
<dbReference type="GO" id="GO:0006816">
    <property type="term" value="P:calcium ion transport"/>
    <property type="evidence" value="ECO:0000315"/>
    <property type="project" value="MGI"/>
</dbReference>
<dbReference type="GO" id="GO:0000902">
    <property type="term" value="P:cell morphogenesis"/>
    <property type="evidence" value="ECO:0000315"/>
    <property type="project" value="MGI"/>
</dbReference>
<dbReference type="GO" id="GO:0006884">
    <property type="term" value="P:cell volume homeostasis"/>
    <property type="evidence" value="ECO:0000314"/>
    <property type="project" value="MGI"/>
</dbReference>
<dbReference type="GO" id="GO:0071359">
    <property type="term" value="P:cellular response to dsRNA"/>
    <property type="evidence" value="ECO:0000315"/>
    <property type="project" value="MGI"/>
</dbReference>
<dbReference type="GO" id="GO:0046513">
    <property type="term" value="P:ceramide biosynthetic process"/>
    <property type="evidence" value="ECO:0000314"/>
    <property type="project" value="MGI"/>
</dbReference>
<dbReference type="GO" id="GO:0032963">
    <property type="term" value="P:collagen metabolic process"/>
    <property type="evidence" value="ECO:0000315"/>
    <property type="project" value="MGI"/>
</dbReference>
<dbReference type="GO" id="GO:0050830">
    <property type="term" value="P:defense response to Gram-positive bacterium"/>
    <property type="evidence" value="ECO:0000315"/>
    <property type="project" value="MGI"/>
</dbReference>
<dbReference type="GO" id="GO:0051649">
    <property type="term" value="P:establishment of localization in cell"/>
    <property type="evidence" value="ECO:0000314"/>
    <property type="project" value="MGI"/>
</dbReference>
<dbReference type="GO" id="GO:0097191">
    <property type="term" value="P:extrinsic apoptotic signaling pathway"/>
    <property type="evidence" value="ECO:0000315"/>
    <property type="project" value="MGI"/>
</dbReference>
<dbReference type="GO" id="GO:0014051">
    <property type="term" value="P:gamma-aminobutyric acid secretion"/>
    <property type="evidence" value="ECO:0000315"/>
    <property type="project" value="MGI"/>
</dbReference>
<dbReference type="GO" id="GO:0010467">
    <property type="term" value="P:gene expression"/>
    <property type="evidence" value="ECO:0000315"/>
    <property type="project" value="MGI"/>
</dbReference>
<dbReference type="GO" id="GO:0014047">
    <property type="term" value="P:glutamate secretion"/>
    <property type="evidence" value="ECO:0000315"/>
    <property type="project" value="MGI"/>
</dbReference>
<dbReference type="GO" id="GO:0048873">
    <property type="term" value="P:homeostasis of number of cells within a tissue"/>
    <property type="evidence" value="ECO:0000315"/>
    <property type="project" value="MGI"/>
</dbReference>
<dbReference type="GO" id="GO:0006954">
    <property type="term" value="P:inflammatory response"/>
    <property type="evidence" value="ECO:0000315"/>
    <property type="project" value="MGI"/>
</dbReference>
<dbReference type="GO" id="GO:0070227">
    <property type="term" value="P:lymphocyte apoptotic process"/>
    <property type="evidence" value="ECO:0000315"/>
    <property type="project" value="MGI"/>
</dbReference>
<dbReference type="GO" id="GO:0000165">
    <property type="term" value="P:MAPK cascade"/>
    <property type="evidence" value="ECO:0000315"/>
    <property type="project" value="MGI"/>
</dbReference>
<dbReference type="GO" id="GO:0006509">
    <property type="term" value="P:membrane protein ectodomain proteolysis"/>
    <property type="evidence" value="ECO:0000315"/>
    <property type="project" value="MGI"/>
</dbReference>
<dbReference type="GO" id="GO:0051882">
    <property type="term" value="P:mitochondrial depolarization"/>
    <property type="evidence" value="ECO:0000315"/>
    <property type="project" value="MGI"/>
</dbReference>
<dbReference type="GO" id="GO:0007005">
    <property type="term" value="P:mitochondrion organization"/>
    <property type="evidence" value="ECO:0000314"/>
    <property type="project" value="MGI"/>
</dbReference>
<dbReference type="GO" id="GO:0006812">
    <property type="term" value="P:monoatomic cation transport"/>
    <property type="evidence" value="ECO:0000315"/>
    <property type="project" value="MGI"/>
</dbReference>
<dbReference type="GO" id="GO:0043132">
    <property type="term" value="P:NAD transport"/>
    <property type="evidence" value="ECO:0000315"/>
    <property type="project" value="MGI"/>
</dbReference>
<dbReference type="GO" id="GO:0045779">
    <property type="term" value="P:negative regulation of bone resorption"/>
    <property type="evidence" value="ECO:0000315"/>
    <property type="project" value="MGI"/>
</dbReference>
<dbReference type="GO" id="GO:0045794">
    <property type="term" value="P:negative regulation of cell volume"/>
    <property type="evidence" value="ECO:0000315"/>
    <property type="project" value="UniProtKB"/>
</dbReference>
<dbReference type="GO" id="GO:0043409">
    <property type="term" value="P:negative regulation of MAPK cascade"/>
    <property type="evidence" value="ECO:0000314"/>
    <property type="project" value="MGI"/>
</dbReference>
<dbReference type="GO" id="GO:0001845">
    <property type="term" value="P:phagolysosome assembly"/>
    <property type="evidence" value="ECO:0000315"/>
    <property type="project" value="MGI"/>
</dbReference>
<dbReference type="GO" id="GO:0006649">
    <property type="term" value="P:phospholipid transfer to membrane"/>
    <property type="evidence" value="ECO:0000315"/>
    <property type="project" value="MGI"/>
</dbReference>
<dbReference type="GO" id="GO:0045332">
    <property type="term" value="P:phospholipid translocation"/>
    <property type="evidence" value="ECO:0000314"/>
    <property type="project" value="MGI"/>
</dbReference>
<dbReference type="GO" id="GO:0007009">
    <property type="term" value="P:plasma membrane organization"/>
    <property type="evidence" value="ECO:0000314"/>
    <property type="project" value="MGI"/>
</dbReference>
<dbReference type="GO" id="GO:0017121">
    <property type="term" value="P:plasma membrane phospholipid scrambling"/>
    <property type="evidence" value="ECO:0007669"/>
    <property type="project" value="Ensembl"/>
</dbReference>
<dbReference type="GO" id="GO:0046931">
    <property type="term" value="P:pore complex assembly"/>
    <property type="evidence" value="ECO:0000315"/>
    <property type="project" value="MGI"/>
</dbReference>
<dbReference type="GO" id="GO:0043065">
    <property type="term" value="P:positive regulation of apoptotic process"/>
    <property type="evidence" value="ECO:0000315"/>
    <property type="project" value="MGI"/>
</dbReference>
<dbReference type="GO" id="GO:1904172">
    <property type="term" value="P:positive regulation of bleb assembly"/>
    <property type="evidence" value="ECO:0007669"/>
    <property type="project" value="Ensembl"/>
</dbReference>
<dbReference type="GO" id="GO:0030501">
    <property type="term" value="P:positive regulation of bone mineralization"/>
    <property type="evidence" value="ECO:0000315"/>
    <property type="project" value="MGI"/>
</dbReference>
<dbReference type="GO" id="GO:0010524">
    <property type="term" value="P:positive regulation of calcium ion transport into cytosol"/>
    <property type="evidence" value="ECO:0007669"/>
    <property type="project" value="Ensembl"/>
</dbReference>
<dbReference type="GO" id="GO:0014054">
    <property type="term" value="P:positive regulation of gamma-aminobutyric acid secretion"/>
    <property type="evidence" value="ECO:0000315"/>
    <property type="project" value="MGI"/>
</dbReference>
<dbReference type="GO" id="GO:0014049">
    <property type="term" value="P:positive regulation of glutamate secretion"/>
    <property type="evidence" value="ECO:0000315"/>
    <property type="project" value="MGI"/>
</dbReference>
<dbReference type="GO" id="GO:0045821">
    <property type="term" value="P:positive regulation of glycolytic process"/>
    <property type="evidence" value="ECO:0007669"/>
    <property type="project" value="Ensembl"/>
</dbReference>
<dbReference type="GO" id="GO:0032730">
    <property type="term" value="P:positive regulation of interleukin-1 alpha production"/>
    <property type="evidence" value="ECO:0000315"/>
    <property type="project" value="MGI"/>
</dbReference>
<dbReference type="GO" id="GO:0032731">
    <property type="term" value="P:positive regulation of interleukin-1 beta production"/>
    <property type="evidence" value="ECO:0000315"/>
    <property type="project" value="MGI"/>
</dbReference>
<dbReference type="GO" id="GO:0032755">
    <property type="term" value="P:positive regulation of interleukin-6 production"/>
    <property type="evidence" value="ECO:0000315"/>
    <property type="project" value="MGI"/>
</dbReference>
<dbReference type="GO" id="GO:0070230">
    <property type="term" value="P:positive regulation of lymphocyte apoptotic process"/>
    <property type="evidence" value="ECO:0000315"/>
    <property type="project" value="MGI"/>
</dbReference>
<dbReference type="GO" id="GO:0060907">
    <property type="term" value="P:positive regulation of macrophage cytokine production"/>
    <property type="evidence" value="ECO:0000315"/>
    <property type="project" value="MGI"/>
</dbReference>
<dbReference type="GO" id="GO:0043410">
    <property type="term" value="P:positive regulation of MAPK cascade"/>
    <property type="evidence" value="ECO:0000315"/>
    <property type="project" value="MGI"/>
</dbReference>
<dbReference type="GO" id="GO:0051901">
    <property type="term" value="P:positive regulation of mitochondrial depolarization"/>
    <property type="evidence" value="ECO:0000315"/>
    <property type="project" value="MGI"/>
</dbReference>
<dbReference type="GO" id="GO:1900227">
    <property type="term" value="P:positive regulation of NLRP3 inflammasome complex assembly"/>
    <property type="evidence" value="ECO:0000315"/>
    <property type="project" value="UniProtKB"/>
</dbReference>
<dbReference type="GO" id="GO:0045778">
    <property type="term" value="P:positive regulation of ossification"/>
    <property type="evidence" value="ECO:0000315"/>
    <property type="project" value="MGI"/>
</dbReference>
<dbReference type="GO" id="GO:0032308">
    <property type="term" value="P:positive regulation of prostaglandin secretion"/>
    <property type="evidence" value="ECO:0000315"/>
    <property type="project" value="MGI"/>
</dbReference>
<dbReference type="GO" id="GO:0050714">
    <property type="term" value="P:positive regulation of protein secretion"/>
    <property type="evidence" value="ECO:0000314"/>
    <property type="project" value="MGI"/>
</dbReference>
<dbReference type="GO" id="GO:0070234">
    <property type="term" value="P:positive regulation of T cell apoptotic process"/>
    <property type="evidence" value="ECO:0000315"/>
    <property type="project" value="MGI"/>
</dbReference>
<dbReference type="GO" id="GO:0001916">
    <property type="term" value="P:positive regulation of T cell mediated cytotoxicity"/>
    <property type="evidence" value="ECO:0000315"/>
    <property type="project" value="MGI"/>
</dbReference>
<dbReference type="GO" id="GO:0012501">
    <property type="term" value="P:programmed cell death"/>
    <property type="evidence" value="ECO:0000314"/>
    <property type="project" value="MGI"/>
</dbReference>
<dbReference type="GO" id="GO:0032310">
    <property type="term" value="P:prostaglandin secretion"/>
    <property type="evidence" value="ECO:0000315"/>
    <property type="project" value="MGI"/>
</dbReference>
<dbReference type="GO" id="GO:0030163">
    <property type="term" value="P:protein catabolic process"/>
    <property type="evidence" value="ECO:0000314"/>
    <property type="project" value="MGI"/>
</dbReference>
<dbReference type="GO" id="GO:0070207">
    <property type="term" value="P:protein homotrimerization"/>
    <property type="evidence" value="ECO:0007669"/>
    <property type="project" value="Ensembl"/>
</dbReference>
<dbReference type="GO" id="GO:0016485">
    <property type="term" value="P:protein processing"/>
    <property type="evidence" value="ECO:0000315"/>
    <property type="project" value="MGI"/>
</dbReference>
<dbReference type="GO" id="GO:0009306">
    <property type="term" value="P:protein secretion"/>
    <property type="evidence" value="ECO:0000314"/>
    <property type="project" value="MGI"/>
</dbReference>
<dbReference type="GO" id="GO:0072593">
    <property type="term" value="P:reactive oxygen species metabolic process"/>
    <property type="evidence" value="ECO:0000315"/>
    <property type="project" value="MGI"/>
</dbReference>
<dbReference type="GO" id="GO:0051209">
    <property type="term" value="P:release of sequestered calcium ion into cytosol"/>
    <property type="evidence" value="ECO:0000315"/>
    <property type="project" value="MGI"/>
</dbReference>
<dbReference type="GO" id="GO:0033198">
    <property type="term" value="P:response to ATP"/>
    <property type="evidence" value="ECO:0000314"/>
    <property type="project" value="MGI"/>
</dbReference>
<dbReference type="GO" id="GO:0009617">
    <property type="term" value="P:response to bacterium"/>
    <property type="evidence" value="ECO:0000315"/>
    <property type="project" value="MGI"/>
</dbReference>
<dbReference type="GO" id="GO:0051592">
    <property type="term" value="P:response to calcium ion"/>
    <property type="evidence" value="ECO:0000314"/>
    <property type="project" value="MGI"/>
</dbReference>
<dbReference type="GO" id="GO:0051602">
    <property type="term" value="P:response to electrical stimulus"/>
    <property type="evidence" value="ECO:0000315"/>
    <property type="project" value="MGI"/>
</dbReference>
<dbReference type="GO" id="GO:0034405">
    <property type="term" value="P:response to fluid shear stress"/>
    <property type="evidence" value="ECO:0000315"/>
    <property type="project" value="MGI"/>
</dbReference>
<dbReference type="GO" id="GO:0032496">
    <property type="term" value="P:response to lipopolysaccharide"/>
    <property type="evidence" value="ECO:0000314"/>
    <property type="project" value="MGI"/>
</dbReference>
<dbReference type="GO" id="GO:0009612">
    <property type="term" value="P:response to mechanical stimulus"/>
    <property type="evidence" value="ECO:0000315"/>
    <property type="project" value="MGI"/>
</dbReference>
<dbReference type="GO" id="GO:0009410">
    <property type="term" value="P:response to xenobiotic stimulus"/>
    <property type="evidence" value="ECO:0000315"/>
    <property type="project" value="MGI"/>
</dbReference>
<dbReference type="GO" id="GO:0010043">
    <property type="term" value="P:response to zinc ion"/>
    <property type="evidence" value="ECO:0000315"/>
    <property type="project" value="MGI"/>
</dbReference>
<dbReference type="GO" id="GO:0019233">
    <property type="term" value="P:sensory perception of pain"/>
    <property type="evidence" value="ECO:0000315"/>
    <property type="project" value="BHF-UCL"/>
</dbReference>
<dbReference type="GO" id="GO:0048705">
    <property type="term" value="P:skeletal system morphogenesis"/>
    <property type="evidence" value="ECO:0000315"/>
    <property type="project" value="MGI"/>
</dbReference>
<dbReference type="GO" id="GO:0016079">
    <property type="term" value="P:synaptic vesicle exocytosis"/>
    <property type="evidence" value="ECO:0000315"/>
    <property type="project" value="MGI"/>
</dbReference>
<dbReference type="GO" id="GO:0070231">
    <property type="term" value="P:T cell apoptotic process"/>
    <property type="evidence" value="ECO:0000315"/>
    <property type="project" value="MGI"/>
</dbReference>
<dbReference type="GO" id="GO:0043029">
    <property type="term" value="P:T cell homeostasis"/>
    <property type="evidence" value="ECO:0000315"/>
    <property type="project" value="MGI"/>
</dbReference>
<dbReference type="GO" id="GO:0001913">
    <property type="term" value="P:T cell mediated cytotoxicity"/>
    <property type="evidence" value="ECO:0000315"/>
    <property type="project" value="MGI"/>
</dbReference>
<dbReference type="GO" id="GO:0042098">
    <property type="term" value="P:T cell proliferation"/>
    <property type="evidence" value="ECO:0000315"/>
    <property type="project" value="MGI"/>
</dbReference>
<dbReference type="GO" id="GO:0006900">
    <property type="term" value="P:vesicle budding from membrane"/>
    <property type="evidence" value="ECO:0000315"/>
    <property type="project" value="MGI"/>
</dbReference>
<dbReference type="FunFam" id="2.60.490.10:FF:000002">
    <property type="entry name" value="P2X purinoceptor"/>
    <property type="match status" value="1"/>
</dbReference>
<dbReference type="FunFam" id="1.10.287.940:FF:000010">
    <property type="entry name" value="P2X receptor E"/>
    <property type="match status" value="1"/>
</dbReference>
<dbReference type="Gene3D" id="1.10.287.940">
    <property type="entry name" value="atp-gated p2x4 ion channel"/>
    <property type="match status" value="1"/>
</dbReference>
<dbReference type="Gene3D" id="2.60.490.10">
    <property type="entry name" value="atp-gated p2x4 ion channel domain"/>
    <property type="match status" value="1"/>
</dbReference>
<dbReference type="InterPro" id="IPR046815">
    <property type="entry name" value="P2RX7_C"/>
</dbReference>
<dbReference type="InterPro" id="IPR003050">
    <property type="entry name" value="P2X7_purinoceptor"/>
</dbReference>
<dbReference type="InterPro" id="IPR027309">
    <property type="entry name" value="P2X_extracellular_dom_sf"/>
</dbReference>
<dbReference type="InterPro" id="IPR001429">
    <property type="entry name" value="P2X_purnocptor"/>
</dbReference>
<dbReference type="InterPro" id="IPR053792">
    <property type="entry name" value="P2X_RECEPTOR_CS"/>
</dbReference>
<dbReference type="NCBIfam" id="TIGR00863">
    <property type="entry name" value="P2X"/>
    <property type="match status" value="1"/>
</dbReference>
<dbReference type="PANTHER" id="PTHR10125">
    <property type="entry name" value="P2X PURINOCEPTOR"/>
    <property type="match status" value="1"/>
</dbReference>
<dbReference type="PANTHER" id="PTHR10125:SF13">
    <property type="entry name" value="P2X PURINOCEPTOR 7"/>
    <property type="match status" value="1"/>
</dbReference>
<dbReference type="Pfam" id="PF20478">
    <property type="entry name" value="P2RX7_C"/>
    <property type="match status" value="1"/>
</dbReference>
<dbReference type="Pfam" id="PF00864">
    <property type="entry name" value="P2X_receptor"/>
    <property type="match status" value="1"/>
</dbReference>
<dbReference type="PRINTS" id="PR01314">
    <property type="entry name" value="P2X7RECEPTOR"/>
</dbReference>
<dbReference type="PRINTS" id="PR01307">
    <property type="entry name" value="P2XRECEPTOR"/>
</dbReference>
<dbReference type="PROSITE" id="PS01212">
    <property type="entry name" value="P2X_RECEPTOR"/>
    <property type="match status" value="1"/>
</dbReference>
<keyword id="KW-0013">ADP-ribosylation</keyword>
<keyword id="KW-0067">ATP-binding</keyword>
<keyword id="KW-1003">Cell membrane</keyword>
<keyword id="KW-1015">Disulfide bond</keyword>
<keyword id="KW-0325">Glycoprotein</keyword>
<keyword id="KW-0342">GTP-binding</keyword>
<keyword id="KW-0407">Ion channel</keyword>
<keyword id="KW-0406">Ion transport</keyword>
<keyword id="KW-1071">Ligand-gated ion channel</keyword>
<keyword id="KW-0449">Lipoprotein</keyword>
<keyword id="KW-0472">Membrane</keyword>
<keyword id="KW-0479">Metal-binding</keyword>
<keyword id="KW-0547">Nucleotide-binding</keyword>
<keyword id="KW-0564">Palmitate</keyword>
<keyword id="KW-0597">Phosphoprotein</keyword>
<keyword id="KW-0675">Receptor</keyword>
<keyword id="KW-1185">Reference proteome</keyword>
<keyword id="KW-0915">Sodium</keyword>
<keyword id="KW-0812">Transmembrane</keyword>
<keyword id="KW-1133">Transmembrane helix</keyword>
<keyword id="KW-0813">Transport</keyword>
<keyword id="KW-0862">Zinc</keyword>
<name>P2RX7_MOUSE</name>
<gene>
    <name type="primary">P2rx7</name>
    <name type="synonym">P2x7</name>
</gene>